<protein>
    <recommendedName>
        <fullName evidence="1">Glucose-6-phosphate isomerase</fullName>
        <shortName evidence="1">GPI</shortName>
        <ecNumber evidence="1">5.3.1.9</ecNumber>
    </recommendedName>
    <alternativeName>
        <fullName evidence="1">Phosphoglucose isomerase</fullName>
        <shortName evidence="1">PGI</shortName>
    </alternativeName>
    <alternativeName>
        <fullName evidence="1">Phosphohexose isomerase</fullName>
        <shortName evidence="1">PHI</shortName>
    </alternativeName>
</protein>
<keyword id="KW-0963">Cytoplasm</keyword>
<keyword id="KW-0312">Gluconeogenesis</keyword>
<keyword id="KW-0324">Glycolysis</keyword>
<keyword id="KW-0413">Isomerase</keyword>
<keyword id="KW-1185">Reference proteome</keyword>
<evidence type="ECO:0000255" key="1">
    <source>
        <dbReference type="HAMAP-Rule" id="MF_00473"/>
    </source>
</evidence>
<name>G6PI_SHEAM</name>
<dbReference type="EC" id="5.3.1.9" evidence="1"/>
<dbReference type="EMBL" id="CP000507">
    <property type="protein sequence ID" value="ABL99119.1"/>
    <property type="molecule type" value="Genomic_DNA"/>
</dbReference>
<dbReference type="RefSeq" id="WP_011759029.1">
    <property type="nucleotide sequence ID" value="NC_008700.1"/>
</dbReference>
<dbReference type="SMR" id="A1S413"/>
<dbReference type="STRING" id="326297.Sama_0912"/>
<dbReference type="KEGG" id="saz:Sama_0912"/>
<dbReference type="eggNOG" id="COG0166">
    <property type="taxonomic scope" value="Bacteria"/>
</dbReference>
<dbReference type="HOGENOM" id="CLU_017947_3_1_6"/>
<dbReference type="OrthoDB" id="140919at2"/>
<dbReference type="UniPathway" id="UPA00109">
    <property type="reaction ID" value="UER00181"/>
</dbReference>
<dbReference type="UniPathway" id="UPA00138"/>
<dbReference type="Proteomes" id="UP000009175">
    <property type="component" value="Chromosome"/>
</dbReference>
<dbReference type="GO" id="GO:0005829">
    <property type="term" value="C:cytosol"/>
    <property type="evidence" value="ECO:0007669"/>
    <property type="project" value="TreeGrafter"/>
</dbReference>
<dbReference type="GO" id="GO:0097367">
    <property type="term" value="F:carbohydrate derivative binding"/>
    <property type="evidence" value="ECO:0007669"/>
    <property type="project" value="InterPro"/>
</dbReference>
<dbReference type="GO" id="GO:0004347">
    <property type="term" value="F:glucose-6-phosphate isomerase activity"/>
    <property type="evidence" value="ECO:0007669"/>
    <property type="project" value="UniProtKB-UniRule"/>
</dbReference>
<dbReference type="GO" id="GO:0048029">
    <property type="term" value="F:monosaccharide binding"/>
    <property type="evidence" value="ECO:0007669"/>
    <property type="project" value="TreeGrafter"/>
</dbReference>
<dbReference type="GO" id="GO:0006094">
    <property type="term" value="P:gluconeogenesis"/>
    <property type="evidence" value="ECO:0007669"/>
    <property type="project" value="UniProtKB-UniRule"/>
</dbReference>
<dbReference type="GO" id="GO:0051156">
    <property type="term" value="P:glucose 6-phosphate metabolic process"/>
    <property type="evidence" value="ECO:0007669"/>
    <property type="project" value="TreeGrafter"/>
</dbReference>
<dbReference type="GO" id="GO:0006096">
    <property type="term" value="P:glycolytic process"/>
    <property type="evidence" value="ECO:0007669"/>
    <property type="project" value="UniProtKB-UniRule"/>
</dbReference>
<dbReference type="CDD" id="cd05015">
    <property type="entry name" value="SIS_PGI_1"/>
    <property type="match status" value="1"/>
</dbReference>
<dbReference type="CDD" id="cd05016">
    <property type="entry name" value="SIS_PGI_2"/>
    <property type="match status" value="1"/>
</dbReference>
<dbReference type="FunFam" id="3.40.50.10490:FF:000018">
    <property type="entry name" value="Glucose-6-phosphate isomerase"/>
    <property type="match status" value="1"/>
</dbReference>
<dbReference type="Gene3D" id="1.10.1390.10">
    <property type="match status" value="1"/>
</dbReference>
<dbReference type="Gene3D" id="3.40.50.10490">
    <property type="entry name" value="Glucose-6-phosphate isomerase like protein, domain 1"/>
    <property type="match status" value="2"/>
</dbReference>
<dbReference type="HAMAP" id="MF_00473">
    <property type="entry name" value="G6P_isomerase"/>
    <property type="match status" value="1"/>
</dbReference>
<dbReference type="InterPro" id="IPR001672">
    <property type="entry name" value="G6P_Isomerase"/>
</dbReference>
<dbReference type="InterPro" id="IPR023096">
    <property type="entry name" value="G6P_Isomerase_C"/>
</dbReference>
<dbReference type="InterPro" id="IPR018189">
    <property type="entry name" value="Phosphoglucose_isomerase_CS"/>
</dbReference>
<dbReference type="InterPro" id="IPR046348">
    <property type="entry name" value="SIS_dom_sf"/>
</dbReference>
<dbReference type="InterPro" id="IPR035476">
    <property type="entry name" value="SIS_PGI_1"/>
</dbReference>
<dbReference type="InterPro" id="IPR035482">
    <property type="entry name" value="SIS_PGI_2"/>
</dbReference>
<dbReference type="NCBIfam" id="NF001211">
    <property type="entry name" value="PRK00179.1"/>
    <property type="match status" value="1"/>
</dbReference>
<dbReference type="PANTHER" id="PTHR11469">
    <property type="entry name" value="GLUCOSE-6-PHOSPHATE ISOMERASE"/>
    <property type="match status" value="1"/>
</dbReference>
<dbReference type="PANTHER" id="PTHR11469:SF1">
    <property type="entry name" value="GLUCOSE-6-PHOSPHATE ISOMERASE"/>
    <property type="match status" value="1"/>
</dbReference>
<dbReference type="Pfam" id="PF00342">
    <property type="entry name" value="PGI"/>
    <property type="match status" value="1"/>
</dbReference>
<dbReference type="PRINTS" id="PR00662">
    <property type="entry name" value="G6PISOMERASE"/>
</dbReference>
<dbReference type="SUPFAM" id="SSF53697">
    <property type="entry name" value="SIS domain"/>
    <property type="match status" value="1"/>
</dbReference>
<dbReference type="PROSITE" id="PS00765">
    <property type="entry name" value="P_GLUCOSE_ISOMERASE_1"/>
    <property type="match status" value="1"/>
</dbReference>
<dbReference type="PROSITE" id="PS00174">
    <property type="entry name" value="P_GLUCOSE_ISOMERASE_2"/>
    <property type="match status" value="1"/>
</dbReference>
<dbReference type="PROSITE" id="PS51463">
    <property type="entry name" value="P_GLUCOSE_ISOMERASE_3"/>
    <property type="match status" value="1"/>
</dbReference>
<gene>
    <name evidence="1" type="primary">pgi</name>
    <name type="ordered locus">Sama_0912</name>
</gene>
<feature type="chain" id="PRO_1000014010" description="Glucose-6-phosphate isomerase">
    <location>
        <begin position="1"/>
        <end position="545"/>
    </location>
</feature>
<feature type="active site" description="Proton donor" evidence="1">
    <location>
        <position position="351"/>
    </location>
</feature>
<feature type="active site" evidence="1">
    <location>
        <position position="382"/>
    </location>
</feature>
<feature type="active site" evidence="1">
    <location>
        <position position="510"/>
    </location>
</feature>
<reference key="1">
    <citation type="submission" date="2006-12" db="EMBL/GenBank/DDBJ databases">
        <title>Complete sequence of Shewanella amazonensis SB2B.</title>
        <authorList>
            <consortium name="US DOE Joint Genome Institute"/>
            <person name="Copeland A."/>
            <person name="Lucas S."/>
            <person name="Lapidus A."/>
            <person name="Barry K."/>
            <person name="Detter J.C."/>
            <person name="Glavina del Rio T."/>
            <person name="Hammon N."/>
            <person name="Israni S."/>
            <person name="Dalin E."/>
            <person name="Tice H."/>
            <person name="Pitluck S."/>
            <person name="Munk A.C."/>
            <person name="Brettin T."/>
            <person name="Bruce D."/>
            <person name="Han C."/>
            <person name="Tapia R."/>
            <person name="Gilna P."/>
            <person name="Schmutz J."/>
            <person name="Larimer F."/>
            <person name="Land M."/>
            <person name="Hauser L."/>
            <person name="Kyrpides N."/>
            <person name="Mikhailova N."/>
            <person name="Fredrickson J."/>
            <person name="Richardson P."/>
        </authorList>
    </citation>
    <scope>NUCLEOTIDE SEQUENCE [LARGE SCALE GENOMIC DNA]</scope>
    <source>
        <strain>ATCC BAA-1098 / SB2B</strain>
    </source>
</reference>
<proteinExistence type="inferred from homology"/>
<sequence length="545" mass="59791">MSRVTNTPEWQKLKEYSNKLPHMRELFATDSARFDKMSLKACGLFLDYSKNRVTEVVLGALFDLAKQAQLEARINAMFAGDIINTTEKRAVLHTALRAPNDAVVEVDGVNVVPEVHATLDKIESFVASITSGEWRGYTGKAITDIVSIGIGGSFLGPKIVTQALRPYWTGKLNCHFVANVDATSLVEKLKLVDPETTLFLMSSKSFGTQETLTNTLSARDWFLQSGASQADVAKHFAAVTSNVAKATDFGIDEANVFPMWDWVGGRYSLWSAIGLPIALMVGMDNYRALLAGARSMDEHFTSAPLAENMPVIMGLLSVWYGNFFNAQSHVVLTYDHYLRGLPAYFQQLDMESNGKSAMMDGETVDFSTGPVIWGGEGTNGQHAYHQLLHQGTALIPADFIMPLQSHNPLGEHHVQLASNCFGQTQALMQGRTYEEALAELAASNLSDDEKSLIARHKVMEGNKPSNTLLMDKLTPSTLGALIALYEHRTFVQGVIWDINSFDQWGVELGKTLGNDVLARLTADEDASALDSSSNALINLFRKGQI</sequence>
<comment type="function">
    <text evidence="1">Catalyzes the reversible isomerization of glucose-6-phosphate to fructose-6-phosphate.</text>
</comment>
<comment type="catalytic activity">
    <reaction evidence="1">
        <text>alpha-D-glucose 6-phosphate = beta-D-fructose 6-phosphate</text>
        <dbReference type="Rhea" id="RHEA:11816"/>
        <dbReference type="ChEBI" id="CHEBI:57634"/>
        <dbReference type="ChEBI" id="CHEBI:58225"/>
        <dbReference type="EC" id="5.3.1.9"/>
    </reaction>
</comment>
<comment type="pathway">
    <text evidence="1">Carbohydrate biosynthesis; gluconeogenesis.</text>
</comment>
<comment type="pathway">
    <text evidence="1">Carbohydrate degradation; glycolysis; D-glyceraldehyde 3-phosphate and glycerone phosphate from D-glucose: step 2/4.</text>
</comment>
<comment type="subcellular location">
    <subcellularLocation>
        <location evidence="1">Cytoplasm</location>
    </subcellularLocation>
</comment>
<comment type="similarity">
    <text evidence="1">Belongs to the GPI family.</text>
</comment>
<accession>A1S413</accession>
<organism>
    <name type="scientific">Shewanella amazonensis (strain ATCC BAA-1098 / SB2B)</name>
    <dbReference type="NCBI Taxonomy" id="326297"/>
    <lineage>
        <taxon>Bacteria</taxon>
        <taxon>Pseudomonadati</taxon>
        <taxon>Pseudomonadota</taxon>
        <taxon>Gammaproteobacteria</taxon>
        <taxon>Alteromonadales</taxon>
        <taxon>Shewanellaceae</taxon>
        <taxon>Shewanella</taxon>
    </lineage>
</organism>